<dbReference type="EMBL" id="AL009126">
    <property type="protein sequence ID" value="CAB14010.1"/>
    <property type="molecule type" value="Genomic_DNA"/>
</dbReference>
<dbReference type="RefSeq" id="NP_389974.1">
    <property type="nucleotide sequence ID" value="NC_000964.3"/>
</dbReference>
<dbReference type="RefSeq" id="WP_004399430.1">
    <property type="nucleotide sequence ID" value="NZ_OZ025638.1"/>
</dbReference>
<dbReference type="SMR" id="O31933"/>
<dbReference type="FunCoup" id="O31933">
    <property type="interactions" value="41"/>
</dbReference>
<dbReference type="STRING" id="224308.BSU20920"/>
<dbReference type="PaxDb" id="224308-BSU20920"/>
<dbReference type="EnsemblBacteria" id="CAB14010">
    <property type="protein sequence ID" value="CAB14010"/>
    <property type="gene ID" value="BSU_20920"/>
</dbReference>
<dbReference type="GeneID" id="939183"/>
<dbReference type="KEGG" id="bsu:BSU20920"/>
<dbReference type="PATRIC" id="fig|224308.179.peg.2282"/>
<dbReference type="InParanoid" id="O31933"/>
<dbReference type="OrthoDB" id="2912132at2"/>
<dbReference type="BioCyc" id="BSUB:BSU20920-MONOMER"/>
<dbReference type="Proteomes" id="UP000001570">
    <property type="component" value="Chromosome"/>
</dbReference>
<dbReference type="GO" id="GO:0005886">
    <property type="term" value="C:plasma membrane"/>
    <property type="evidence" value="ECO:0007669"/>
    <property type="project" value="UniProtKB-SubCell"/>
</dbReference>
<accession>O31933</accession>
<proteinExistence type="predicted"/>
<keyword id="KW-1003">Cell membrane</keyword>
<keyword id="KW-0472">Membrane</keyword>
<keyword id="KW-1185">Reference proteome</keyword>
<keyword id="KW-0812">Transmembrane</keyword>
<keyword id="KW-1133">Transmembrane helix</keyword>
<name>YOPE_BACSU</name>
<comment type="subcellular location">
    <subcellularLocation>
        <location evidence="2">Cell membrane</location>
        <topology evidence="2">Multi-pass membrane protein</topology>
    </subcellularLocation>
</comment>
<feature type="chain" id="PRO_0000360462" description="SPbeta prophage-derived uncharacterized protein YopE">
    <location>
        <begin position="1"/>
        <end position="83"/>
    </location>
</feature>
<feature type="transmembrane region" description="Helical" evidence="1">
    <location>
        <begin position="5"/>
        <end position="25"/>
    </location>
</feature>
<feature type="transmembrane region" description="Helical" evidence="1">
    <location>
        <begin position="60"/>
        <end position="80"/>
    </location>
</feature>
<reference key="1">
    <citation type="journal article" date="1997" name="Nature">
        <title>The complete genome sequence of the Gram-positive bacterium Bacillus subtilis.</title>
        <authorList>
            <person name="Kunst F."/>
            <person name="Ogasawara N."/>
            <person name="Moszer I."/>
            <person name="Albertini A.M."/>
            <person name="Alloni G."/>
            <person name="Azevedo V."/>
            <person name="Bertero M.G."/>
            <person name="Bessieres P."/>
            <person name="Bolotin A."/>
            <person name="Borchert S."/>
            <person name="Borriss R."/>
            <person name="Boursier L."/>
            <person name="Brans A."/>
            <person name="Braun M."/>
            <person name="Brignell S.C."/>
            <person name="Bron S."/>
            <person name="Brouillet S."/>
            <person name="Bruschi C.V."/>
            <person name="Caldwell B."/>
            <person name="Capuano V."/>
            <person name="Carter N.M."/>
            <person name="Choi S.-K."/>
            <person name="Codani J.-J."/>
            <person name="Connerton I.F."/>
            <person name="Cummings N.J."/>
            <person name="Daniel R.A."/>
            <person name="Denizot F."/>
            <person name="Devine K.M."/>
            <person name="Duesterhoeft A."/>
            <person name="Ehrlich S.D."/>
            <person name="Emmerson P.T."/>
            <person name="Entian K.-D."/>
            <person name="Errington J."/>
            <person name="Fabret C."/>
            <person name="Ferrari E."/>
            <person name="Foulger D."/>
            <person name="Fritz C."/>
            <person name="Fujita M."/>
            <person name="Fujita Y."/>
            <person name="Fuma S."/>
            <person name="Galizzi A."/>
            <person name="Galleron N."/>
            <person name="Ghim S.-Y."/>
            <person name="Glaser P."/>
            <person name="Goffeau A."/>
            <person name="Golightly E.J."/>
            <person name="Grandi G."/>
            <person name="Guiseppi G."/>
            <person name="Guy B.J."/>
            <person name="Haga K."/>
            <person name="Haiech J."/>
            <person name="Harwood C.R."/>
            <person name="Henaut A."/>
            <person name="Hilbert H."/>
            <person name="Holsappel S."/>
            <person name="Hosono S."/>
            <person name="Hullo M.-F."/>
            <person name="Itaya M."/>
            <person name="Jones L.-M."/>
            <person name="Joris B."/>
            <person name="Karamata D."/>
            <person name="Kasahara Y."/>
            <person name="Klaerr-Blanchard M."/>
            <person name="Klein C."/>
            <person name="Kobayashi Y."/>
            <person name="Koetter P."/>
            <person name="Koningstein G."/>
            <person name="Krogh S."/>
            <person name="Kumano M."/>
            <person name="Kurita K."/>
            <person name="Lapidus A."/>
            <person name="Lardinois S."/>
            <person name="Lauber J."/>
            <person name="Lazarevic V."/>
            <person name="Lee S.-M."/>
            <person name="Levine A."/>
            <person name="Liu H."/>
            <person name="Masuda S."/>
            <person name="Mauel C."/>
            <person name="Medigue C."/>
            <person name="Medina N."/>
            <person name="Mellado R.P."/>
            <person name="Mizuno M."/>
            <person name="Moestl D."/>
            <person name="Nakai S."/>
            <person name="Noback M."/>
            <person name="Noone D."/>
            <person name="O'Reilly M."/>
            <person name="Ogawa K."/>
            <person name="Ogiwara A."/>
            <person name="Oudega B."/>
            <person name="Park S.-H."/>
            <person name="Parro V."/>
            <person name="Pohl T.M."/>
            <person name="Portetelle D."/>
            <person name="Porwollik S."/>
            <person name="Prescott A.M."/>
            <person name="Presecan E."/>
            <person name="Pujic P."/>
            <person name="Purnelle B."/>
            <person name="Rapoport G."/>
            <person name="Rey M."/>
            <person name="Reynolds S."/>
            <person name="Rieger M."/>
            <person name="Rivolta C."/>
            <person name="Rocha E."/>
            <person name="Roche B."/>
            <person name="Rose M."/>
            <person name="Sadaie Y."/>
            <person name="Sato T."/>
            <person name="Scanlan E."/>
            <person name="Schleich S."/>
            <person name="Schroeter R."/>
            <person name="Scoffone F."/>
            <person name="Sekiguchi J."/>
            <person name="Sekowska A."/>
            <person name="Seror S.J."/>
            <person name="Serror P."/>
            <person name="Shin B.-S."/>
            <person name="Soldo B."/>
            <person name="Sorokin A."/>
            <person name="Tacconi E."/>
            <person name="Takagi T."/>
            <person name="Takahashi H."/>
            <person name="Takemaru K."/>
            <person name="Takeuchi M."/>
            <person name="Tamakoshi A."/>
            <person name="Tanaka T."/>
            <person name="Terpstra P."/>
            <person name="Tognoni A."/>
            <person name="Tosato V."/>
            <person name="Uchiyama S."/>
            <person name="Vandenbol M."/>
            <person name="Vannier F."/>
            <person name="Vassarotti A."/>
            <person name="Viari A."/>
            <person name="Wambutt R."/>
            <person name="Wedler E."/>
            <person name="Wedler H."/>
            <person name="Weitzenegger T."/>
            <person name="Winters P."/>
            <person name="Wipat A."/>
            <person name="Yamamoto H."/>
            <person name="Yamane K."/>
            <person name="Yasumoto K."/>
            <person name="Yata K."/>
            <person name="Yoshida K."/>
            <person name="Yoshikawa H.-F."/>
            <person name="Zumstein E."/>
            <person name="Yoshikawa H."/>
            <person name="Danchin A."/>
        </authorList>
    </citation>
    <scope>NUCLEOTIDE SEQUENCE [LARGE SCALE GENOMIC DNA]</scope>
    <source>
        <strain>168</strain>
    </source>
</reference>
<gene>
    <name type="primary">yopE</name>
    <name type="ordered locus">BSU20920</name>
</gene>
<sequence>MIGLAYFLIIWLGVGLLTGIKFIFVDQVYDEEFKELMDKETAAGMERNLASLFFKNKLNVIAFFMLIGLLPLAMRITKLFKRG</sequence>
<organism>
    <name type="scientific">Bacillus subtilis (strain 168)</name>
    <dbReference type="NCBI Taxonomy" id="224308"/>
    <lineage>
        <taxon>Bacteria</taxon>
        <taxon>Bacillati</taxon>
        <taxon>Bacillota</taxon>
        <taxon>Bacilli</taxon>
        <taxon>Bacillales</taxon>
        <taxon>Bacillaceae</taxon>
        <taxon>Bacillus</taxon>
    </lineage>
</organism>
<protein>
    <recommendedName>
        <fullName>SPbeta prophage-derived uncharacterized protein YopE</fullName>
    </recommendedName>
</protein>
<evidence type="ECO:0000255" key="1"/>
<evidence type="ECO:0000305" key="2"/>